<accession>Q5E973</accession>
<feature type="chain" id="PRO_0000240141" description="Large ribosomal subunit protein eL18">
    <location>
        <begin position="1"/>
        <end position="188"/>
    </location>
</feature>
<feature type="region of interest" description="Disordered" evidence="3">
    <location>
        <begin position="150"/>
        <end position="188"/>
    </location>
</feature>
<feature type="compositionally biased region" description="Basic residues" evidence="3">
    <location>
        <begin position="161"/>
        <end position="171"/>
    </location>
</feature>
<feature type="compositionally biased region" description="Basic residues" evidence="3">
    <location>
        <begin position="178"/>
        <end position="188"/>
    </location>
</feature>
<feature type="modified residue" description="Phosphoserine" evidence="1">
    <location>
        <position position="130"/>
    </location>
</feature>
<feature type="modified residue" description="Phosphothreonine" evidence="1">
    <location>
        <position position="158"/>
    </location>
</feature>
<feature type="cross-link" description="Glycyl lysine isopeptide (Lys-Gly) (interchain with G-Cter in SUMO2)" evidence="1">
    <location>
        <position position="119"/>
    </location>
</feature>
<feature type="cross-link" description="Glycyl lysine isopeptide (Lys-Gly) (interchain with G-Cter in SUMO2)" evidence="1">
    <location>
        <position position="164"/>
    </location>
</feature>
<sequence length="188" mass="21535">MGVDIRHNKDRKVRRKEPKSQDIYLRLLVKLYRFLARRTNSTFNQVVLKRLFMSRTNRPPLSLSRMIRKMKLPGREGKTAVVVGTITDDVRVQEVPKLKVCALRVSSRARSRILKAGGKILTFDQLALDSPKGCGTVLLSGPRKGREVYRHFGKAPGTPHSHTKPYVRSKGRKFERARGRRASRGYKN</sequence>
<comment type="function">
    <text evidence="1">Component of the large ribosomal subunit. The ribosome is a large ribonucleoprotein complex responsible for the synthesis of proteins in the cell.</text>
</comment>
<comment type="subunit">
    <text evidence="1">Component of the large ribosomal subunit.</text>
</comment>
<comment type="subcellular location">
    <subcellularLocation>
        <location evidence="1">Cytoplasm</location>
        <location evidence="1">Cytosol</location>
    </subcellularLocation>
    <subcellularLocation>
        <location evidence="1">Cytoplasm</location>
    </subcellularLocation>
    <subcellularLocation>
        <location evidence="2">Rough endoplasmic reticulum</location>
    </subcellularLocation>
    <text evidence="1 2">Detected on cytosolic polysomes (By similarity). Detected in ribosomes that are associated with the rough endoplasmic reticulum (By similarity).</text>
</comment>
<comment type="similarity">
    <text evidence="4">Belongs to the eukaryotic ribosomal protein eL18 family.</text>
</comment>
<keyword id="KW-0963">Cytoplasm</keyword>
<keyword id="KW-0256">Endoplasmic reticulum</keyword>
<keyword id="KW-1017">Isopeptide bond</keyword>
<keyword id="KW-0597">Phosphoprotein</keyword>
<keyword id="KW-1185">Reference proteome</keyword>
<keyword id="KW-0687">Ribonucleoprotein</keyword>
<keyword id="KW-0689">Ribosomal protein</keyword>
<keyword id="KW-0832">Ubl conjugation</keyword>
<protein>
    <recommendedName>
        <fullName evidence="4">Large ribosomal subunit protein eL18</fullName>
    </recommendedName>
    <alternativeName>
        <fullName>60S ribosomal protein L18</fullName>
    </alternativeName>
</protein>
<organism>
    <name type="scientific">Bos taurus</name>
    <name type="common">Bovine</name>
    <dbReference type="NCBI Taxonomy" id="9913"/>
    <lineage>
        <taxon>Eukaryota</taxon>
        <taxon>Metazoa</taxon>
        <taxon>Chordata</taxon>
        <taxon>Craniata</taxon>
        <taxon>Vertebrata</taxon>
        <taxon>Euteleostomi</taxon>
        <taxon>Mammalia</taxon>
        <taxon>Eutheria</taxon>
        <taxon>Laurasiatheria</taxon>
        <taxon>Artiodactyla</taxon>
        <taxon>Ruminantia</taxon>
        <taxon>Pecora</taxon>
        <taxon>Bovidae</taxon>
        <taxon>Bovinae</taxon>
        <taxon>Bos</taxon>
    </lineage>
</organism>
<evidence type="ECO:0000250" key="1">
    <source>
        <dbReference type="UniProtKB" id="Q07020"/>
    </source>
</evidence>
<evidence type="ECO:0000250" key="2">
    <source>
        <dbReference type="UniProtKB" id="Q95342"/>
    </source>
</evidence>
<evidence type="ECO:0000256" key="3">
    <source>
        <dbReference type="SAM" id="MobiDB-lite"/>
    </source>
</evidence>
<evidence type="ECO:0000305" key="4"/>
<gene>
    <name type="primary">RPL18</name>
</gene>
<name>RL18_BOVIN</name>
<reference key="1">
    <citation type="journal article" date="2005" name="BMC Genomics">
        <title>Characterization of 954 bovine full-CDS cDNA sequences.</title>
        <authorList>
            <person name="Harhay G.P."/>
            <person name="Sonstegard T.S."/>
            <person name="Keele J.W."/>
            <person name="Heaton M.P."/>
            <person name="Clawson M.L."/>
            <person name="Snelling W.M."/>
            <person name="Wiedmann R.T."/>
            <person name="Van Tassell C.P."/>
            <person name="Smith T.P.L."/>
        </authorList>
    </citation>
    <scope>NUCLEOTIDE SEQUENCE [LARGE SCALE MRNA]</scope>
</reference>
<reference key="2">
    <citation type="submission" date="2005-09" db="EMBL/GenBank/DDBJ databases">
        <authorList>
            <consortium name="NIH - Mammalian Gene Collection (MGC) project"/>
        </authorList>
    </citation>
    <scope>NUCLEOTIDE SEQUENCE [LARGE SCALE MRNA]</scope>
    <source>
        <strain>Hereford</strain>
        <tissue>Ascending colon</tissue>
    </source>
</reference>
<dbReference type="EMBL" id="BT021047">
    <property type="protein sequence ID" value="AAX09064.1"/>
    <property type="molecule type" value="mRNA"/>
</dbReference>
<dbReference type="EMBL" id="BC104507">
    <property type="protein sequence ID" value="AAI04508.1"/>
    <property type="molecule type" value="mRNA"/>
</dbReference>
<dbReference type="RefSeq" id="NP_001015556.1">
    <property type="nucleotide sequence ID" value="NM_001015556.2"/>
</dbReference>
<dbReference type="SMR" id="Q5E973"/>
<dbReference type="FunCoup" id="Q5E973">
    <property type="interactions" value="2629"/>
</dbReference>
<dbReference type="PaxDb" id="9913-ENSBTAP00000020452"/>
<dbReference type="PeptideAtlas" id="Q5E973"/>
<dbReference type="GeneID" id="509163"/>
<dbReference type="KEGG" id="bta:509163"/>
<dbReference type="CTD" id="6141"/>
<dbReference type="VEuPathDB" id="HostDB:ENSBTAG00000015388"/>
<dbReference type="eggNOG" id="KOG1714">
    <property type="taxonomic scope" value="Eukaryota"/>
</dbReference>
<dbReference type="HOGENOM" id="CLU_080024_0_0_1"/>
<dbReference type="InParanoid" id="Q5E973"/>
<dbReference type="OrthoDB" id="6353017at2759"/>
<dbReference type="TreeFam" id="TF300202"/>
<dbReference type="Reactome" id="R-BTA-156827">
    <property type="pathway name" value="L13a-mediated translational silencing of Ceruloplasmin expression"/>
</dbReference>
<dbReference type="Reactome" id="R-BTA-1799339">
    <property type="pathway name" value="SRP-dependent cotranslational protein targeting to membrane"/>
</dbReference>
<dbReference type="Reactome" id="R-BTA-6791226">
    <property type="pathway name" value="Major pathway of rRNA processing in the nucleolus and cytosol"/>
</dbReference>
<dbReference type="Reactome" id="R-BTA-72689">
    <property type="pathway name" value="Formation of a pool of free 40S subunits"/>
</dbReference>
<dbReference type="Reactome" id="R-BTA-72706">
    <property type="pathway name" value="GTP hydrolysis and joining of the 60S ribosomal subunit"/>
</dbReference>
<dbReference type="Reactome" id="R-BTA-975956">
    <property type="pathway name" value="Nonsense Mediated Decay (NMD) independent of the Exon Junction Complex (EJC)"/>
</dbReference>
<dbReference type="Reactome" id="R-BTA-975957">
    <property type="pathway name" value="Nonsense Mediated Decay (NMD) enhanced by the Exon Junction Complex (EJC)"/>
</dbReference>
<dbReference type="CD-CODE" id="D7FE2080">
    <property type="entry name" value="Nucleolus"/>
</dbReference>
<dbReference type="Proteomes" id="UP000009136">
    <property type="component" value="Chromosome 18"/>
</dbReference>
<dbReference type="Bgee" id="ENSBTAG00000015388">
    <property type="expression patterns" value="Expressed in isthmus of fallopian tube and 106 other cell types or tissues"/>
</dbReference>
<dbReference type="GO" id="GO:0022625">
    <property type="term" value="C:cytosolic large ribosomal subunit"/>
    <property type="evidence" value="ECO:0000250"/>
    <property type="project" value="UniProtKB"/>
</dbReference>
<dbReference type="GO" id="GO:0005791">
    <property type="term" value="C:rough endoplasmic reticulum"/>
    <property type="evidence" value="ECO:0007669"/>
    <property type="project" value="UniProtKB-SubCell"/>
</dbReference>
<dbReference type="GO" id="GO:0003723">
    <property type="term" value="F:RNA binding"/>
    <property type="evidence" value="ECO:0000318"/>
    <property type="project" value="GO_Central"/>
</dbReference>
<dbReference type="GO" id="GO:0003735">
    <property type="term" value="F:structural constituent of ribosome"/>
    <property type="evidence" value="ECO:0000318"/>
    <property type="project" value="GO_Central"/>
</dbReference>
<dbReference type="GO" id="GO:0002181">
    <property type="term" value="P:cytoplasmic translation"/>
    <property type="evidence" value="ECO:0000250"/>
    <property type="project" value="UniProtKB"/>
</dbReference>
<dbReference type="FunFam" id="3.100.10.10:FF:000001">
    <property type="entry name" value="60S ribosomal protein L18"/>
    <property type="match status" value="1"/>
</dbReference>
<dbReference type="Gene3D" id="3.100.10.10">
    <property type="match status" value="1"/>
</dbReference>
<dbReference type="InterPro" id="IPR000039">
    <property type="entry name" value="Ribosomal_eL18"/>
</dbReference>
<dbReference type="InterPro" id="IPR021132">
    <property type="entry name" value="Ribosomal_eL18/eL18-A/B/_CS"/>
</dbReference>
<dbReference type="InterPro" id="IPR021131">
    <property type="entry name" value="Ribosomal_uL15/eL18"/>
</dbReference>
<dbReference type="InterPro" id="IPR036227">
    <property type="entry name" value="Ribosomal_uL15/eL18_sf"/>
</dbReference>
<dbReference type="PANTHER" id="PTHR10934">
    <property type="entry name" value="60S RIBOSOMAL PROTEIN L18"/>
    <property type="match status" value="1"/>
</dbReference>
<dbReference type="PANTHER" id="PTHR10934:SF2">
    <property type="entry name" value="LARGE RIBOSOMAL SUBUNIT PROTEIN EL18"/>
    <property type="match status" value="1"/>
</dbReference>
<dbReference type="Pfam" id="PF17135">
    <property type="entry name" value="Ribosomal_L18"/>
    <property type="match status" value="1"/>
</dbReference>
<dbReference type="SUPFAM" id="SSF52080">
    <property type="entry name" value="Ribosomal proteins L15p and L18e"/>
    <property type="match status" value="1"/>
</dbReference>
<dbReference type="PROSITE" id="PS01106">
    <property type="entry name" value="RIBOSOMAL_L18E"/>
    <property type="match status" value="1"/>
</dbReference>
<proteinExistence type="evidence at transcript level"/>